<accession>B5XN82</accession>
<protein>
    <recommendedName>
        <fullName evidence="1">Sulfurtransferase TusD</fullName>
        <ecNumber evidence="1">2.8.1.-</ecNumber>
    </recommendedName>
    <alternativeName>
        <fullName evidence="1">tRNA 2-thiouridine synthesizing protein D</fullName>
    </alternativeName>
</protein>
<name>TUSD_KLEP3</name>
<reference key="1">
    <citation type="journal article" date="2008" name="PLoS Genet.">
        <title>Complete genome sequence of the N2-fixing broad host range endophyte Klebsiella pneumoniae 342 and virulence predictions verified in mice.</title>
        <authorList>
            <person name="Fouts D.E."/>
            <person name="Tyler H.L."/>
            <person name="DeBoy R.T."/>
            <person name="Daugherty S."/>
            <person name="Ren Q."/>
            <person name="Badger J.H."/>
            <person name="Durkin A.S."/>
            <person name="Huot H."/>
            <person name="Shrivastava S."/>
            <person name="Kothari S."/>
            <person name="Dodson R.J."/>
            <person name="Mohamoud Y."/>
            <person name="Khouri H."/>
            <person name="Roesch L.F.W."/>
            <person name="Krogfelt K.A."/>
            <person name="Struve C."/>
            <person name="Triplett E.W."/>
            <person name="Methe B.A."/>
        </authorList>
    </citation>
    <scope>NUCLEOTIDE SEQUENCE [LARGE SCALE GENOMIC DNA]</scope>
    <source>
        <strain>342</strain>
    </source>
</reference>
<organism>
    <name type="scientific">Klebsiella pneumoniae (strain 342)</name>
    <dbReference type="NCBI Taxonomy" id="507522"/>
    <lineage>
        <taxon>Bacteria</taxon>
        <taxon>Pseudomonadati</taxon>
        <taxon>Pseudomonadota</taxon>
        <taxon>Gammaproteobacteria</taxon>
        <taxon>Enterobacterales</taxon>
        <taxon>Enterobacteriaceae</taxon>
        <taxon>Klebsiella/Raoultella group</taxon>
        <taxon>Klebsiella</taxon>
        <taxon>Klebsiella pneumoniae complex</taxon>
    </lineage>
</organism>
<keyword id="KW-0963">Cytoplasm</keyword>
<keyword id="KW-0808">Transferase</keyword>
<keyword id="KW-0819">tRNA processing</keyword>
<sequence>MRFALTVTGPAYGTQQASSAWQFAQAVLQEGHELACVFFYREGVLNANQLTAPASDEFDLVRAWQSLHDEQGVALHICVAAALRRGVTDEREAQQLALASHNLQPGFTLSGLGALAEAALTCDRMVQF</sequence>
<proteinExistence type="inferred from homology"/>
<gene>
    <name evidence="1" type="primary">tusD</name>
    <name type="ordered locus">KPK_0387</name>
</gene>
<feature type="chain" id="PRO_1000122866" description="Sulfurtransferase TusD">
    <location>
        <begin position="1"/>
        <end position="128"/>
    </location>
</feature>
<feature type="active site" description="Cysteine persulfide intermediate" evidence="1">
    <location>
        <position position="78"/>
    </location>
</feature>
<evidence type="ECO:0000255" key="1">
    <source>
        <dbReference type="HAMAP-Rule" id="MF_00390"/>
    </source>
</evidence>
<comment type="function">
    <text evidence="1">Part of a sulfur-relay system required for 2-thiolation of 5-methylaminomethyl-2-thiouridine (mnm(5)s(2)U) at tRNA wobble positions. Accepts sulfur from TusA and transfers it in turn to TusE.</text>
</comment>
<comment type="subunit">
    <text evidence="1">Heterohexamer, formed by a dimer of trimers. The hexameric TusBCD complex contains 2 copies each of TusB, TusC and TusD. The TusBCD complex interacts with TusE.</text>
</comment>
<comment type="subcellular location">
    <subcellularLocation>
        <location evidence="1">Cytoplasm</location>
    </subcellularLocation>
</comment>
<comment type="similarity">
    <text evidence="1">Belongs to the DsrE/TusD family.</text>
</comment>
<dbReference type="EC" id="2.8.1.-" evidence="1"/>
<dbReference type="EMBL" id="CP000964">
    <property type="protein sequence ID" value="ACI07727.1"/>
    <property type="molecule type" value="Genomic_DNA"/>
</dbReference>
<dbReference type="SMR" id="B5XN82"/>
<dbReference type="KEGG" id="kpe:KPK_0387"/>
<dbReference type="HOGENOM" id="CLU_132095_0_0_6"/>
<dbReference type="Proteomes" id="UP000001734">
    <property type="component" value="Chromosome"/>
</dbReference>
<dbReference type="GO" id="GO:1990228">
    <property type="term" value="C:sulfurtransferase complex"/>
    <property type="evidence" value="ECO:0007669"/>
    <property type="project" value="TreeGrafter"/>
</dbReference>
<dbReference type="GO" id="GO:0097163">
    <property type="term" value="F:sulfur carrier activity"/>
    <property type="evidence" value="ECO:0007669"/>
    <property type="project" value="TreeGrafter"/>
</dbReference>
<dbReference type="GO" id="GO:0016783">
    <property type="term" value="F:sulfurtransferase activity"/>
    <property type="evidence" value="ECO:0007669"/>
    <property type="project" value="UniProtKB-UniRule"/>
</dbReference>
<dbReference type="GO" id="GO:0002143">
    <property type="term" value="P:tRNA wobble position uridine thiolation"/>
    <property type="evidence" value="ECO:0007669"/>
    <property type="project" value="TreeGrafter"/>
</dbReference>
<dbReference type="FunFam" id="3.40.1260.10:FF:000001">
    <property type="entry name" value="Sulfurtransferase TusD"/>
    <property type="match status" value="1"/>
</dbReference>
<dbReference type="Gene3D" id="3.40.1260.10">
    <property type="entry name" value="DsrEFH-like"/>
    <property type="match status" value="1"/>
</dbReference>
<dbReference type="HAMAP" id="MF_00390">
    <property type="entry name" value="Thiourid_synth_D"/>
    <property type="match status" value="1"/>
</dbReference>
<dbReference type="InterPro" id="IPR027396">
    <property type="entry name" value="DsrEFH-like"/>
</dbReference>
<dbReference type="InterPro" id="IPR003787">
    <property type="entry name" value="Sulphur_relay_DsrE/F-like"/>
</dbReference>
<dbReference type="InterPro" id="IPR017463">
    <property type="entry name" value="Sulphur_relay_TusD/DsrE"/>
</dbReference>
<dbReference type="NCBIfam" id="NF001237">
    <property type="entry name" value="PRK00207.1"/>
    <property type="match status" value="1"/>
</dbReference>
<dbReference type="NCBIfam" id="TIGR03012">
    <property type="entry name" value="sulf_tusD_dsrE"/>
    <property type="match status" value="1"/>
</dbReference>
<dbReference type="PANTHER" id="PTHR34874">
    <property type="entry name" value="PROTEIN YCHN"/>
    <property type="match status" value="1"/>
</dbReference>
<dbReference type="PANTHER" id="PTHR34874:SF3">
    <property type="entry name" value="SULFURTRANSFERASE TUSD"/>
    <property type="match status" value="1"/>
</dbReference>
<dbReference type="Pfam" id="PF02635">
    <property type="entry name" value="DsrE"/>
    <property type="match status" value="1"/>
</dbReference>
<dbReference type="SUPFAM" id="SSF75169">
    <property type="entry name" value="DsrEFH-like"/>
    <property type="match status" value="1"/>
</dbReference>